<comment type="function">
    <text evidence="1">Collagen VI acts as a cell-binding protein.</text>
</comment>
<comment type="subcellular location">
    <subcellularLocation>
        <location evidence="1">Secreted</location>
        <location evidence="1">Extracellular space</location>
        <location evidence="1">Extracellular matrix</location>
    </subcellularLocation>
</comment>
<comment type="similarity">
    <text evidence="5">Belongs to the type VI collagen family.</text>
</comment>
<sequence length="1045" mass="109993">MKMLQGRLPLTVLHLFLLLGGGMTQQRPQGPIKDINGLPAQGPTVSVRPGPDPSDKVTFQDCPVDIFFVLDTSESVALRVKPFKTLVTQVKEFTKKFIDKLTSRYYRCDRNLVWNAGALHYSDEVILINSLTRDMKTLRDNVETVEYIGKGTHTDCAIKRGIEEVLIGGSHQKENKYLIVVTDGHPLEGYKEPCGGLEDAANEAKHLGIKVFSVAISPNHLEPRLSVIASDASHRRNFTATSAVGLTDDEIDNTIDTIIDMIKENAEQGCCTYECKPSRGLSGPSGPPGYEGEIGKPGLPGDRGLPGDPGRQGDIGPVGYQGMKGDQGIRGEKGGRGAKGSKGDKGKRGIDGVDGQKGEDGYNGLPGCKGSPGFDGAPGSSGPKGDPGPYGTKGEKGVPGTPGTGGRPGNTGNTGDKGDPGSNGLAGEKGESGDEGDAGADGSPGKRGEAGELGPPGVSGGRGARGEKGEPGPPGDQGRDGPAGPFGDPGEAGPQGPKGYRGDEGPRGPEGPKGPRGAKGLPGEQGIAGERGDDGRPGNGTDGFPGFQGYPGSRGDPGSNGTKGYPGPKGDEGEQGEPGDDNVSPGPPGPKGAKGYRGPEGPPGPPGPGGPPGPDECEILDIIKRMCSCCECTCGPLDLLFVLDSSESIGLSNFQISKDFILKVIDRLSRDEHVKFDADNSHVGVVQYSHGQTQEVVAMGDSSIQSIGQLKEAVKNLKWIAGGTWTGEALAFTKDNLLKRFTLEKKIALVLTDGHSDILRDKTPLNTLCEVTPVVSVGVGDIFQNAPNSDQLVQISCGGKPYSKGLSLQRTSFAELLDDGFLHNVTSHMCSDRKCPDYTCPITYEGPADITMLVDSSTRVGNQHFQTSKSFVKLLAERFLKAKPPPSGSARVSVVQYSGQNQQIVEAQFLTNYTVLEVPVDNMQFINGATNVVSALRAVTELYREDSLAGVNKKLLVFSDGNTQEEKGLLKVVQDAQSAGIEIYVLAVGSRLNYPNLQVMLTGSAADIAGPFPEERLFRVPDYTSLLQGVRYQSISRRIALKSSQ</sequence>
<name>CO6A1_XENLA</name>
<accession>Q801S8</accession>
<evidence type="ECO:0000250" key="1"/>
<evidence type="ECO:0000255" key="2"/>
<evidence type="ECO:0000255" key="3">
    <source>
        <dbReference type="PROSITE-ProRule" id="PRU00219"/>
    </source>
</evidence>
<evidence type="ECO:0000256" key="4">
    <source>
        <dbReference type="SAM" id="MobiDB-lite"/>
    </source>
</evidence>
<evidence type="ECO:0000305" key="5"/>
<gene>
    <name type="primary">col6a1</name>
</gene>
<protein>
    <recommendedName>
        <fullName>Collagen alpha-1(VI) chain</fullName>
    </recommendedName>
</protein>
<reference key="1">
    <citation type="submission" date="2003-02" db="EMBL/GenBank/DDBJ databases">
        <authorList>
            <consortium name="NIH - Xenopus Gene Collection (XGC) project"/>
        </authorList>
    </citation>
    <scope>NUCLEOTIDE SEQUENCE [LARGE SCALE MRNA]</scope>
    <source>
        <tissue>Embryo</tissue>
    </source>
</reference>
<reference key="2">
    <citation type="journal article" date="2010" name="Proteomics">
        <title>A proteome map of the pituitary melanotrope cell activated by black-background adaptation of Xenopus laevis.</title>
        <authorList>
            <person name="Devreese B."/>
            <person name="Sergeant K."/>
            <person name="Van Bakel N.H."/>
            <person name="Debyser G."/>
            <person name="Van Beeumen J."/>
            <person name="Martens G.J."/>
            <person name="Van Herp F."/>
        </authorList>
    </citation>
    <scope>IDENTIFICATION BY MASS SPECTROMETRY</scope>
</reference>
<dbReference type="EMBL" id="BC047255">
    <property type="protein sequence ID" value="AAH47255.1"/>
    <property type="molecule type" value="mRNA"/>
</dbReference>
<dbReference type="RefSeq" id="NP_001080437.1">
    <property type="nucleotide sequence ID" value="NM_001086968.1"/>
</dbReference>
<dbReference type="SMR" id="Q801S8"/>
<dbReference type="DNASU" id="380129"/>
<dbReference type="AGR" id="Xenbase:XB-GENE-998859"/>
<dbReference type="Xenbase" id="XB-GENE-998859">
    <property type="gene designation" value="col6a1.L"/>
</dbReference>
<dbReference type="Proteomes" id="UP000186698">
    <property type="component" value="Unplaced"/>
</dbReference>
<dbReference type="Bgee" id="380129">
    <property type="expression patterns" value="Expressed in lung and 17 other cell types or tissues"/>
</dbReference>
<dbReference type="GO" id="GO:0005581">
    <property type="term" value="C:collagen trimer"/>
    <property type="evidence" value="ECO:0007669"/>
    <property type="project" value="UniProtKB-KW"/>
</dbReference>
<dbReference type="GO" id="GO:0005615">
    <property type="term" value="C:extracellular space"/>
    <property type="evidence" value="ECO:0007669"/>
    <property type="project" value="TreeGrafter"/>
</dbReference>
<dbReference type="GO" id="GO:0007155">
    <property type="term" value="P:cell adhesion"/>
    <property type="evidence" value="ECO:0007669"/>
    <property type="project" value="UniProtKB-KW"/>
</dbReference>
<dbReference type="CDD" id="cd01480">
    <property type="entry name" value="vWA_collagen_alpha_1-VI-type"/>
    <property type="match status" value="3"/>
</dbReference>
<dbReference type="FunFam" id="3.40.50.410:FF:000026">
    <property type="entry name" value="Collagen, type VI, alpha 1"/>
    <property type="match status" value="1"/>
</dbReference>
<dbReference type="FunFam" id="3.40.50.410:FF:000050">
    <property type="entry name" value="Collagen, type VI, alpha 1"/>
    <property type="match status" value="1"/>
</dbReference>
<dbReference type="Gene3D" id="3.40.50.410">
    <property type="entry name" value="von Willebrand factor, type A domain"/>
    <property type="match status" value="3"/>
</dbReference>
<dbReference type="InterPro" id="IPR008160">
    <property type="entry name" value="Collagen"/>
</dbReference>
<dbReference type="InterPro" id="IPR050525">
    <property type="entry name" value="ECM_Assembly_Org"/>
</dbReference>
<dbReference type="InterPro" id="IPR002035">
    <property type="entry name" value="VWF_A"/>
</dbReference>
<dbReference type="InterPro" id="IPR036465">
    <property type="entry name" value="vWFA_dom_sf"/>
</dbReference>
<dbReference type="PANTHER" id="PTHR24020">
    <property type="entry name" value="COLLAGEN ALPHA"/>
    <property type="match status" value="1"/>
</dbReference>
<dbReference type="PANTHER" id="PTHR24020:SF18">
    <property type="entry name" value="COLLAGEN ALPHA-1(VI) CHAIN"/>
    <property type="match status" value="1"/>
</dbReference>
<dbReference type="Pfam" id="PF01391">
    <property type="entry name" value="Collagen"/>
    <property type="match status" value="1"/>
</dbReference>
<dbReference type="Pfam" id="PF00092">
    <property type="entry name" value="VWA"/>
    <property type="match status" value="3"/>
</dbReference>
<dbReference type="PRINTS" id="PR00453">
    <property type="entry name" value="VWFADOMAIN"/>
</dbReference>
<dbReference type="SMART" id="SM00327">
    <property type="entry name" value="VWA"/>
    <property type="match status" value="3"/>
</dbReference>
<dbReference type="SUPFAM" id="SSF53300">
    <property type="entry name" value="vWA-like"/>
    <property type="match status" value="3"/>
</dbReference>
<dbReference type="PROSITE" id="PS50234">
    <property type="entry name" value="VWFA"/>
    <property type="match status" value="3"/>
</dbReference>
<feature type="signal peptide" evidence="2">
    <location>
        <begin position="1"/>
        <end position="24"/>
    </location>
</feature>
<feature type="chain" id="PRO_0000379424" description="Collagen alpha-1(VI) chain">
    <location>
        <begin position="25"/>
        <end position="1045"/>
    </location>
</feature>
<feature type="domain" description="VWFA 1" evidence="3">
    <location>
        <begin position="65"/>
        <end position="255"/>
    </location>
</feature>
<feature type="domain" description="VWFA 2" evidence="3">
    <location>
        <begin position="638"/>
        <end position="825"/>
    </location>
</feature>
<feature type="domain" description="VWFA 3" evidence="3">
    <location>
        <begin position="849"/>
        <end position="1035"/>
    </location>
</feature>
<feature type="region of interest" description="Disordered" evidence="4">
    <location>
        <begin position="277"/>
        <end position="613"/>
    </location>
</feature>
<feature type="region of interest" description="Triple-helical region">
    <location>
        <begin position="280"/>
        <end position="540"/>
    </location>
</feature>
<feature type="short sequence motif" description="Cell attachment site" evidence="1">
    <location>
        <begin position="501"/>
        <end position="503"/>
    </location>
</feature>
<feature type="short sequence motif" description="Cell attachment site" evidence="1">
    <location>
        <begin position="554"/>
        <end position="556"/>
    </location>
</feature>
<feature type="compositionally biased region" description="Low complexity" evidence="4">
    <location>
        <begin position="297"/>
        <end position="309"/>
    </location>
</feature>
<feature type="compositionally biased region" description="Basic and acidic residues" evidence="4">
    <location>
        <begin position="327"/>
        <end position="360"/>
    </location>
</feature>
<feature type="compositionally biased region" description="Low complexity" evidence="4">
    <location>
        <begin position="375"/>
        <end position="392"/>
    </location>
</feature>
<feature type="compositionally biased region" description="Gly residues" evidence="4">
    <location>
        <begin position="400"/>
        <end position="409"/>
    </location>
</feature>
<feature type="compositionally biased region" description="Pro residues" evidence="4">
    <location>
        <begin position="600"/>
        <end position="613"/>
    </location>
</feature>
<proteinExistence type="evidence at protein level"/>
<organism>
    <name type="scientific">Xenopus laevis</name>
    <name type="common">African clawed frog</name>
    <dbReference type="NCBI Taxonomy" id="8355"/>
    <lineage>
        <taxon>Eukaryota</taxon>
        <taxon>Metazoa</taxon>
        <taxon>Chordata</taxon>
        <taxon>Craniata</taxon>
        <taxon>Vertebrata</taxon>
        <taxon>Euteleostomi</taxon>
        <taxon>Amphibia</taxon>
        <taxon>Batrachia</taxon>
        <taxon>Anura</taxon>
        <taxon>Pipoidea</taxon>
        <taxon>Pipidae</taxon>
        <taxon>Xenopodinae</taxon>
        <taxon>Xenopus</taxon>
        <taxon>Xenopus</taxon>
    </lineage>
</organism>
<keyword id="KW-0130">Cell adhesion</keyword>
<keyword id="KW-0176">Collagen</keyword>
<keyword id="KW-0272">Extracellular matrix</keyword>
<keyword id="KW-1185">Reference proteome</keyword>
<keyword id="KW-0677">Repeat</keyword>
<keyword id="KW-0964">Secreted</keyword>
<keyword id="KW-0732">Signal</keyword>